<dbReference type="EC" id="3.1.3.-" evidence="1"/>
<dbReference type="EMBL" id="AE001437">
    <property type="protein sequence ID" value="AAK78489.1"/>
    <property type="molecule type" value="Genomic_DNA"/>
</dbReference>
<dbReference type="PIR" id="F96962">
    <property type="entry name" value="F96962"/>
</dbReference>
<dbReference type="RefSeq" id="NP_347149.1">
    <property type="nucleotide sequence ID" value="NC_003030.1"/>
</dbReference>
<dbReference type="RefSeq" id="WP_010963831.1">
    <property type="nucleotide sequence ID" value="NC_003030.1"/>
</dbReference>
<dbReference type="SMR" id="Q97LP5"/>
<dbReference type="STRING" id="272562.CA_C0509"/>
<dbReference type="DNASU" id="1116692"/>
<dbReference type="KEGG" id="cac:CA_C0509"/>
<dbReference type="PATRIC" id="fig|272562.8.peg.708"/>
<dbReference type="eggNOG" id="COG1387">
    <property type="taxonomic scope" value="Bacteria"/>
</dbReference>
<dbReference type="HOGENOM" id="CLU_061999_0_1_9"/>
<dbReference type="OrthoDB" id="9808747at2"/>
<dbReference type="Proteomes" id="UP000000814">
    <property type="component" value="Chromosome"/>
</dbReference>
<dbReference type="GO" id="GO:0005829">
    <property type="term" value="C:cytosol"/>
    <property type="evidence" value="ECO:0007669"/>
    <property type="project" value="TreeGrafter"/>
</dbReference>
<dbReference type="GO" id="GO:0016791">
    <property type="term" value="F:phosphatase activity"/>
    <property type="evidence" value="ECO:0007669"/>
    <property type="project" value="UniProtKB-UniRule"/>
</dbReference>
<dbReference type="GO" id="GO:0008270">
    <property type="term" value="F:zinc ion binding"/>
    <property type="evidence" value="ECO:0007669"/>
    <property type="project" value="UniProtKB-UniRule"/>
</dbReference>
<dbReference type="CDD" id="cd07437">
    <property type="entry name" value="PHP_HisPPase_Ycdx_like"/>
    <property type="match status" value="1"/>
</dbReference>
<dbReference type="Gene3D" id="3.20.20.140">
    <property type="entry name" value="Metal-dependent hydrolases"/>
    <property type="match status" value="1"/>
</dbReference>
<dbReference type="HAMAP" id="MF_01561">
    <property type="entry name" value="YcdX_phosphat"/>
    <property type="match status" value="1"/>
</dbReference>
<dbReference type="InterPro" id="IPR023710">
    <property type="entry name" value="Phosphatase_YcdX_put"/>
</dbReference>
<dbReference type="InterPro" id="IPR004013">
    <property type="entry name" value="PHP_dom"/>
</dbReference>
<dbReference type="InterPro" id="IPR050243">
    <property type="entry name" value="PHP_phosphatase"/>
</dbReference>
<dbReference type="InterPro" id="IPR003141">
    <property type="entry name" value="Pol/His_phosphatase_N"/>
</dbReference>
<dbReference type="InterPro" id="IPR016195">
    <property type="entry name" value="Pol/histidinol_Pase-like"/>
</dbReference>
<dbReference type="NCBIfam" id="NF006702">
    <property type="entry name" value="PRK09248.1"/>
    <property type="match status" value="1"/>
</dbReference>
<dbReference type="PANTHER" id="PTHR36928">
    <property type="entry name" value="PHOSPHATASE YCDX-RELATED"/>
    <property type="match status" value="1"/>
</dbReference>
<dbReference type="PANTHER" id="PTHR36928:SF1">
    <property type="entry name" value="PHOSPHATASE YCDX-RELATED"/>
    <property type="match status" value="1"/>
</dbReference>
<dbReference type="Pfam" id="PF02811">
    <property type="entry name" value="PHP"/>
    <property type="match status" value="1"/>
</dbReference>
<dbReference type="SMART" id="SM00481">
    <property type="entry name" value="POLIIIAc"/>
    <property type="match status" value="1"/>
</dbReference>
<dbReference type="SUPFAM" id="SSF89550">
    <property type="entry name" value="PHP domain-like"/>
    <property type="match status" value="1"/>
</dbReference>
<feature type="chain" id="PRO_0000228690" description="Probable phosphatase CA_C0509">
    <location>
        <begin position="1"/>
        <end position="244"/>
    </location>
</feature>
<feature type="binding site" evidence="1">
    <location>
        <position position="8"/>
    </location>
    <ligand>
        <name>Zn(2+)</name>
        <dbReference type="ChEBI" id="CHEBI:29105"/>
        <label>1</label>
    </ligand>
</feature>
<feature type="binding site" evidence="1">
    <location>
        <position position="10"/>
    </location>
    <ligand>
        <name>Zn(2+)</name>
        <dbReference type="ChEBI" id="CHEBI:29105"/>
        <label>1</label>
    </ligand>
</feature>
<feature type="binding site" evidence="1">
    <location>
        <position position="16"/>
    </location>
    <ligand>
        <name>Zn(2+)</name>
        <dbReference type="ChEBI" id="CHEBI:29105"/>
        <label>2</label>
    </ligand>
</feature>
<feature type="binding site" evidence="1">
    <location>
        <position position="41"/>
    </location>
    <ligand>
        <name>Zn(2+)</name>
        <dbReference type="ChEBI" id="CHEBI:29105"/>
        <label>2</label>
    </ligand>
</feature>
<feature type="binding site" evidence="1">
    <location>
        <position position="74"/>
    </location>
    <ligand>
        <name>Zn(2+)</name>
        <dbReference type="ChEBI" id="CHEBI:29105"/>
        <label>1</label>
    </ligand>
</feature>
<feature type="binding site" evidence="1">
    <location>
        <position position="74"/>
    </location>
    <ligand>
        <name>Zn(2+)</name>
        <dbReference type="ChEBI" id="CHEBI:29105"/>
        <label>3</label>
    </ligand>
</feature>
<feature type="binding site" evidence="1">
    <location>
        <position position="102"/>
    </location>
    <ligand>
        <name>Zn(2+)</name>
        <dbReference type="ChEBI" id="CHEBI:29105"/>
        <label>3</label>
    </ligand>
</feature>
<feature type="binding site" evidence="1">
    <location>
        <position position="132"/>
    </location>
    <ligand>
        <name>Zn(2+)</name>
        <dbReference type="ChEBI" id="CHEBI:29105"/>
        <label>3</label>
    </ligand>
</feature>
<feature type="binding site" evidence="1">
    <location>
        <position position="193"/>
    </location>
    <ligand>
        <name>Zn(2+)</name>
        <dbReference type="ChEBI" id="CHEBI:29105"/>
        <label>1</label>
    </ligand>
</feature>
<feature type="binding site" evidence="1">
    <location>
        <position position="195"/>
    </location>
    <ligand>
        <name>Zn(2+)</name>
        <dbReference type="ChEBI" id="CHEBI:29105"/>
        <label>2</label>
    </ligand>
</feature>
<reference key="1">
    <citation type="journal article" date="2001" name="J. Bacteriol.">
        <title>Genome sequence and comparative analysis of the solvent-producing bacterium Clostridium acetobutylicum.</title>
        <authorList>
            <person name="Noelling J."/>
            <person name="Breton G."/>
            <person name="Omelchenko M.V."/>
            <person name="Makarova K.S."/>
            <person name="Zeng Q."/>
            <person name="Gibson R."/>
            <person name="Lee H.M."/>
            <person name="Dubois J."/>
            <person name="Qiu D."/>
            <person name="Hitti J."/>
            <person name="Wolf Y.I."/>
            <person name="Tatusov R.L."/>
            <person name="Sabathe F."/>
            <person name="Doucette-Stamm L.A."/>
            <person name="Soucaille P."/>
            <person name="Daly M.J."/>
            <person name="Bennett G.N."/>
            <person name="Koonin E.V."/>
            <person name="Smith D.R."/>
        </authorList>
    </citation>
    <scope>NUCLEOTIDE SEQUENCE [LARGE SCALE GENOMIC DNA]</scope>
    <source>
        <strain>ATCC 824 / DSM 792 / JCM 1419 / IAM 19013 / LMG 5710 / NBRC 13948 / NRRL B-527 / VKM B-1787 / 2291 / W</strain>
    </source>
</reference>
<gene>
    <name type="ordered locus">CA_C0509</name>
</gene>
<sequence length="244" mass="27072">MKYLIDLHTHTIVSGHAYTTLLENIKQASQIGIKILGTSEHGPKMPGAPHIWYFGNMNKVPRKIYDVTVLRGCEADILNSNGDLDIPERIQNELDYIIASLHDVCIEPGTIEDNTKALLNAMNNPNIDILGHTGNPMYPIDIDAVVSKAKEKNVLIEINNGSLSGSREGSYDNCKKIAQACKKKGVKVILGTDSHISFTIGNFDKVQKLLDSVDMPKELIMNTDEKKIVEYLKAKGKLKNFNLE</sequence>
<comment type="cofactor">
    <cofactor evidence="1">
        <name>Zn(2+)</name>
        <dbReference type="ChEBI" id="CHEBI:29105"/>
    </cofactor>
    <text evidence="1">Binds 3 Zn(2+) ions per subunit.</text>
</comment>
<comment type="similarity">
    <text evidence="1">Belongs to the PHP family.</text>
</comment>
<keyword id="KW-0378">Hydrolase</keyword>
<keyword id="KW-0479">Metal-binding</keyword>
<keyword id="KW-1185">Reference proteome</keyword>
<keyword id="KW-0862">Zinc</keyword>
<evidence type="ECO:0000255" key="1">
    <source>
        <dbReference type="HAMAP-Rule" id="MF_01561"/>
    </source>
</evidence>
<accession>Q97LP5</accession>
<proteinExistence type="inferred from homology"/>
<organism>
    <name type="scientific">Clostridium acetobutylicum (strain ATCC 824 / DSM 792 / JCM 1419 / IAM 19013 / LMG 5710 / NBRC 13948 / NRRL B-527 / VKM B-1787 / 2291 / W)</name>
    <dbReference type="NCBI Taxonomy" id="272562"/>
    <lineage>
        <taxon>Bacteria</taxon>
        <taxon>Bacillati</taxon>
        <taxon>Bacillota</taxon>
        <taxon>Clostridia</taxon>
        <taxon>Eubacteriales</taxon>
        <taxon>Clostridiaceae</taxon>
        <taxon>Clostridium</taxon>
    </lineage>
</organism>
<protein>
    <recommendedName>
        <fullName evidence="1">Probable phosphatase CA_C0509</fullName>
        <ecNumber evidence="1">3.1.3.-</ecNumber>
    </recommendedName>
</protein>
<name>Y509_CLOAB</name>